<reference key="1">
    <citation type="journal article" date="2011" name="Proc. Natl. Acad. Sci. U.S.A.">
        <title>Genomic anatomy of Escherichia coli O157:H7 outbreaks.</title>
        <authorList>
            <person name="Eppinger M."/>
            <person name="Mammel M.K."/>
            <person name="Leclerc J.E."/>
            <person name="Ravel J."/>
            <person name="Cebula T.A."/>
        </authorList>
    </citation>
    <scope>NUCLEOTIDE SEQUENCE [LARGE SCALE GENOMIC DNA]</scope>
    <source>
        <strain>EC4115 / EHEC</strain>
    </source>
</reference>
<feature type="chain" id="PRO_1000136137" description="Protein TsgA">
    <location>
        <begin position="1"/>
        <end position="393"/>
    </location>
</feature>
<feature type="transmembrane region" description="Helical" evidence="1">
    <location>
        <begin position="11"/>
        <end position="31"/>
    </location>
</feature>
<feature type="transmembrane region" description="Helical" evidence="1">
    <location>
        <begin position="51"/>
        <end position="71"/>
    </location>
</feature>
<feature type="transmembrane region" description="Helical" evidence="1">
    <location>
        <begin position="78"/>
        <end position="98"/>
    </location>
</feature>
<feature type="transmembrane region" description="Helical" evidence="1">
    <location>
        <begin position="101"/>
        <end position="121"/>
    </location>
</feature>
<feature type="transmembrane region" description="Helical" evidence="1">
    <location>
        <begin position="134"/>
        <end position="154"/>
    </location>
</feature>
<feature type="transmembrane region" description="Helical" evidence="1">
    <location>
        <begin position="162"/>
        <end position="182"/>
    </location>
</feature>
<feature type="transmembrane region" description="Helical" evidence="1">
    <location>
        <begin position="206"/>
        <end position="226"/>
    </location>
</feature>
<feature type="transmembrane region" description="Helical" evidence="1">
    <location>
        <begin position="245"/>
        <end position="265"/>
    </location>
</feature>
<feature type="transmembrane region" description="Helical" evidence="1">
    <location>
        <begin position="273"/>
        <end position="293"/>
    </location>
</feature>
<feature type="transmembrane region" description="Helical" evidence="1">
    <location>
        <begin position="297"/>
        <end position="317"/>
    </location>
</feature>
<feature type="transmembrane region" description="Helical" evidence="1">
    <location>
        <begin position="332"/>
        <end position="352"/>
    </location>
</feature>
<feature type="transmembrane region" description="Helical" evidence="1">
    <location>
        <begin position="361"/>
        <end position="381"/>
    </location>
</feature>
<name>TSGA_ECO5E</name>
<comment type="subcellular location">
    <subcellularLocation>
        <location evidence="1">Cell inner membrane</location>
        <topology evidence="1">Multi-pass membrane protein</topology>
    </subcellularLocation>
</comment>
<comment type="similarity">
    <text evidence="1">Belongs to the major facilitator superfamily. TsgA family.</text>
</comment>
<sequence>MTNSNRIKLTWISFLSYALTGALVIVTGMVMGNIADYFNLPVSSMSNTFTFLNAGILISIFLNAWLMEIVPLKTQLRFGFLLMVLAVAGLMFSHSLALFSAAMFILGVVSGITMSIGTFLVTQMYEGRQRGSRLLFTDSFFSMAGMIFPMIAAFLLARSIEWYWVYACIGLVYVAIFILTFGCEFPALGKHAPKTDAPVAKEKWGIGVLFLSVAALCYILGQLGFISWVPEYAKGLGMSLNDAGTLVSNFWMSYMVGMWAFSFILRFFDLQRILTVLAGLAAILMYVFNTGTPAHMAWSILALGFFSSAIYTTIITLGSQQTKVPSPKLVNFVLTCGTIGTMLTFVVTGPIVEHSGPQAALLTANGLYAVVFVMCFLLGFVSRHRQHNTLTSH</sequence>
<accession>B5YTS2</accession>
<gene>
    <name evidence="1" type="primary">tsgA</name>
    <name type="ordered locus">ECH74115_4675</name>
</gene>
<proteinExistence type="inferred from homology"/>
<evidence type="ECO:0000255" key="1">
    <source>
        <dbReference type="HAMAP-Rule" id="MF_01044"/>
    </source>
</evidence>
<dbReference type="EMBL" id="CP001164">
    <property type="protein sequence ID" value="ACI35142.1"/>
    <property type="molecule type" value="Genomic_DNA"/>
</dbReference>
<dbReference type="RefSeq" id="WP_000185243.1">
    <property type="nucleotide sequence ID" value="NC_011353.1"/>
</dbReference>
<dbReference type="SMR" id="B5YTS2"/>
<dbReference type="GeneID" id="75173522"/>
<dbReference type="KEGG" id="ecf:ECH74115_4675"/>
<dbReference type="HOGENOM" id="CLU_056916_0_0_6"/>
<dbReference type="GO" id="GO:0005886">
    <property type="term" value="C:plasma membrane"/>
    <property type="evidence" value="ECO:0007669"/>
    <property type="project" value="UniProtKB-SubCell"/>
</dbReference>
<dbReference type="GO" id="GO:0022857">
    <property type="term" value="F:transmembrane transporter activity"/>
    <property type="evidence" value="ECO:0007669"/>
    <property type="project" value="InterPro"/>
</dbReference>
<dbReference type="CDD" id="cd17333">
    <property type="entry name" value="MFS_FucP_MFSD4_like"/>
    <property type="match status" value="1"/>
</dbReference>
<dbReference type="FunFam" id="1.20.1250.20:FF:000032">
    <property type="entry name" value="Protein TsgA"/>
    <property type="match status" value="1"/>
</dbReference>
<dbReference type="FunFam" id="1.20.1250.20:FF:000052">
    <property type="entry name" value="Protein TsgA"/>
    <property type="match status" value="1"/>
</dbReference>
<dbReference type="Gene3D" id="1.20.1250.20">
    <property type="entry name" value="MFS general substrate transporter like domains"/>
    <property type="match status" value="2"/>
</dbReference>
<dbReference type="HAMAP" id="MF_01044">
    <property type="entry name" value="MFS_TsgA"/>
    <property type="match status" value="1"/>
</dbReference>
<dbReference type="InterPro" id="IPR011701">
    <property type="entry name" value="MFS"/>
</dbReference>
<dbReference type="InterPro" id="IPR020846">
    <property type="entry name" value="MFS_dom"/>
</dbReference>
<dbReference type="InterPro" id="IPR036259">
    <property type="entry name" value="MFS_trans_sf"/>
</dbReference>
<dbReference type="InterPro" id="IPR023528">
    <property type="entry name" value="MFS_TsgA"/>
</dbReference>
<dbReference type="InterPro" id="IPR050375">
    <property type="entry name" value="MFS_TsgA-like"/>
</dbReference>
<dbReference type="NCBIfam" id="NF002982">
    <property type="entry name" value="PRK03699.1"/>
    <property type="match status" value="1"/>
</dbReference>
<dbReference type="PANTHER" id="PTHR43702">
    <property type="entry name" value="L-FUCOSE-PROTON SYMPORTER"/>
    <property type="match status" value="1"/>
</dbReference>
<dbReference type="PANTHER" id="PTHR43702:SF3">
    <property type="entry name" value="PROTEIN TSGA"/>
    <property type="match status" value="1"/>
</dbReference>
<dbReference type="Pfam" id="PF07690">
    <property type="entry name" value="MFS_1"/>
    <property type="match status" value="1"/>
</dbReference>
<dbReference type="SUPFAM" id="SSF103473">
    <property type="entry name" value="MFS general substrate transporter"/>
    <property type="match status" value="1"/>
</dbReference>
<dbReference type="PROSITE" id="PS50850">
    <property type="entry name" value="MFS"/>
    <property type="match status" value="1"/>
</dbReference>
<keyword id="KW-0997">Cell inner membrane</keyword>
<keyword id="KW-1003">Cell membrane</keyword>
<keyword id="KW-0472">Membrane</keyword>
<keyword id="KW-0812">Transmembrane</keyword>
<keyword id="KW-1133">Transmembrane helix</keyword>
<organism>
    <name type="scientific">Escherichia coli O157:H7 (strain EC4115 / EHEC)</name>
    <dbReference type="NCBI Taxonomy" id="444450"/>
    <lineage>
        <taxon>Bacteria</taxon>
        <taxon>Pseudomonadati</taxon>
        <taxon>Pseudomonadota</taxon>
        <taxon>Gammaproteobacteria</taxon>
        <taxon>Enterobacterales</taxon>
        <taxon>Enterobacteriaceae</taxon>
        <taxon>Escherichia</taxon>
    </lineage>
</organism>
<protein>
    <recommendedName>
        <fullName evidence="1">Protein TsgA</fullName>
    </recommendedName>
</protein>